<gene>
    <name evidence="3" type="primary">nylC</name>
</gene>
<evidence type="ECO:0000269" key="1">
    <source>
    </source>
</evidence>
<evidence type="ECO:0000269" key="2">
    <source>
    </source>
</evidence>
<evidence type="ECO:0000303" key="3">
    <source>
    </source>
</evidence>
<evidence type="ECO:0000303" key="4">
    <source>
    </source>
</evidence>
<evidence type="ECO:0000303" key="5">
    <source>
    </source>
</evidence>
<evidence type="ECO:0000305" key="6"/>
<evidence type="ECO:0000305" key="7">
    <source>
    </source>
</evidence>
<evidence type="ECO:0007744" key="8">
    <source>
        <dbReference type="PDB" id="3AXG"/>
    </source>
</evidence>
<evidence type="ECO:0007829" key="9">
    <source>
        <dbReference type="PDB" id="3AXG"/>
    </source>
</evidence>
<reference key="1">
    <citation type="journal article" date="2007" name="Appl. Environ. Microbiol.">
        <title>6-Aminohexanoate oligomer hydrolases from the alkalophilic bacteria Agromyces sp. strain KY5R and Kocuria sp. strain KY2.</title>
        <authorList>
            <person name="Yasuhira K."/>
            <person name="Tanaka Y."/>
            <person name="Shibata H."/>
            <person name="Kawashima Y."/>
            <person name="Ohara A."/>
            <person name="Kato D."/>
            <person name="Takeo M."/>
            <person name="Negoro S."/>
        </authorList>
    </citation>
    <scope>NUCLEOTIDE SEQUENCE [GENOMIC DNA]</scope>
    <scope>PROTEIN SEQUENCE OF 267-276</scope>
    <scope>FUNCTION</scope>
    <scope>CATALYTIC ACTIVITY</scope>
    <scope>BIOPHYSICOCHEMICAL PROPERTIES</scope>
    <scope>PATHWAY</scope>
    <scope>PROTEOLYTIC PROCESSING</scope>
    <source>
        <strain>KY5R</strain>
    </source>
</reference>
<reference key="2">
    <citation type="journal article" date="2007" name="J. Biosci. Bioeng.">
        <title>Genetic organization of nylon-oligomer-degrading enzymes from alkalophilic bacterium, Agromyces sp. KY5R.</title>
        <authorList>
            <person name="Yasuhira K."/>
            <person name="Uedo Y."/>
            <person name="Takeo M."/>
            <person name="Kato D."/>
            <person name="Negoro S."/>
        </authorList>
    </citation>
    <scope>NUCLEOTIDE SEQUENCE [GENOMIC DNA]</scope>
    <source>
        <strain>KY5R</strain>
    </source>
</reference>
<reference key="3">
    <citation type="journal article" date="2011" name="Acta Crystallogr. F">
        <title>Crystallization and X-ray diffraction analysis of nylon-oligomer hydrolase (NylC) from Agromyces sp. KY5R.</title>
        <authorList>
            <person name="Yasuhira K."/>
            <person name="Shibata N."/>
            <person name="Tanaka Y."/>
            <person name="Kumagai N."/>
            <person name="Tanaka Y."/>
            <person name="Nagai K."/>
            <person name="Kato D."/>
            <person name="Takeo M."/>
            <person name="Negoro S."/>
            <person name="Higuchi Y."/>
        </authorList>
    </citation>
    <scope>CRYSTALLIZATION</scope>
    <source>
        <strain>KY5R</strain>
    </source>
</reference>
<reference evidence="8" key="4">
    <citation type="journal article" date="2012" name="J. Biol. Chem.">
        <title>Three-dimensional structure of nylon hydrolase and mechanism of nylon-6 hydrolysis.</title>
        <authorList>
            <person name="Negoro S."/>
            <person name="Shibata N."/>
            <person name="Tanaka Y."/>
            <person name="Yasuhira K."/>
            <person name="Shibata H."/>
            <person name="Hashimoto H."/>
            <person name="Lee Y.H."/>
            <person name="Oshima S."/>
            <person name="Santa R."/>
            <person name="Oshima S."/>
            <person name="Mochiji K."/>
            <person name="Goto Y."/>
            <person name="Ikegami T."/>
            <person name="Nagai K."/>
            <person name="Kato D."/>
            <person name="Takeo M."/>
            <person name="Higuchi Y."/>
        </authorList>
    </citation>
    <scope>X-RAY CRYSTALLOGRAPHY (2.00 ANGSTROMS)</scope>
    <scope>SUBUNIT</scope>
    <scope>PROTEOLYTIC PROCESSING</scope>
    <scope>ACTIVE SITE</scope>
    <source>
        <strain>KY5R</strain>
    </source>
</reference>
<sequence>MNTTPVHALTDIDGGIAVDPAPRLAGPPVFGGPGNDAFDLAPVRSTGREMLRFDFPGVSIGAAHYEEGPTGATVIHIPAGARTAVDARGGAVGLSGGYDFNHAICLAGGASYGLEAGAGVSGALLERLEYRTGFAEAQLVSSAVIYDFSARSTAVYPDKALGRAALEFAVPGEFPQGRAGAGMSASAGKVDWDRTEITGQGAAFRRLGDVRILAVVVPNPVGVIMDRAGTVVRGNYDAQTGVRRHPVFDYQEAFAEQVPPVTEAGNTTISAIVTNVRMSPVELNQFAKQVHSSMHRGIQPFHTDMDGDTLFAVTTDEIDLPTTPGSSRGRLSVNATALGAIASEVMWDAVLEAGK</sequence>
<accession>Q1EPR5</accession>
<comment type="function">
    <text evidence="1">Involved in the degradation of nylon-6 oligomers. Degrades cyclic and linear oligomers of 6-aminohexanoate (Ahx) with a degree of polymerization greater than three by an endo-type mode. Cannot use Ahx cyclic dimer or the Ahx linear dimer.</text>
</comment>
<comment type="catalytic activity">
    <reaction evidence="1">
        <text>[N-(6-aminohexanoyl)]n + H2O = [N-(6-aminohexanoyl)]n-x + [N-(6-aminohexanoyl)]x.</text>
        <dbReference type="EC" id="3.5.1.117"/>
    </reaction>
</comment>
<comment type="biophysicochemical properties">
    <kinetics>
        <KM evidence="1">0.49 mg/ml for Ahx cyclic-oligomer</KM>
        <text evidence="1">kcat is 11.1 sec(-1) with Ahx cyclic-oligomer as substrate.</text>
    </kinetics>
    <phDependence>
        <text evidence="1">Optimum pH is 7.0-8.5.</text>
    </phDependence>
</comment>
<comment type="pathway">
    <text evidence="1">Xenobiotic degradation; nylon-6 oligomer degradation.</text>
</comment>
<comment type="subunit">
    <text evidence="2">Heterotetramer composed of 4 alpha/beta heterodimers.</text>
</comment>
<comment type="PTM">
    <text evidence="1 2">Expressed as an inactive precursor that is cleaved autocatalytically at Asn266/Thr267 to generate an active enzyme composed of an alpha subunit and a beta subunit.</text>
</comment>
<comment type="similarity">
    <text evidence="6">Belongs to the peptidase S58 family.</text>
</comment>
<protein>
    <recommendedName>
        <fullName evidence="6">6-aminohexanoate-oligomer endohydrolase</fullName>
        <ecNumber evidence="1">3.5.1.117</ecNumber>
    </recommendedName>
    <alternativeName>
        <fullName evidence="3">6-aminohexanoate oligomer hydrolase</fullName>
    </alternativeName>
    <alternativeName>
        <fullName evidence="3">Ahx endo-type-oligomer hydrolase</fullName>
    </alternativeName>
    <alternativeName>
        <fullName evidence="5">Nylon hydrolase</fullName>
    </alternativeName>
    <alternativeName>
        <fullName evidence="4">Nylon-oligomer hydrolase</fullName>
    </alternativeName>
    <alternativeName>
        <fullName evidence="5">Nylonase</fullName>
    </alternativeName>
    <component>
        <recommendedName>
            <fullName evidence="6">6-aminohexanoate-oligomer endohydrolase alpha subunit</fullName>
        </recommendedName>
    </component>
    <component>
        <recommendedName>
            <fullName evidence="6">6-aminohexanoate-oligomer endohydrolase beta subunit</fullName>
        </recommendedName>
    </component>
</protein>
<keyword id="KW-0002">3D-structure</keyword>
<keyword id="KW-0903">Direct protein sequencing</keyword>
<keyword id="KW-0378">Hydrolase</keyword>
<keyword id="KW-0549">Nylon degradation</keyword>
<feature type="chain" id="PRO_0000452351" description="6-aminohexanoate-oligomer endohydrolase alpha subunit" evidence="6">
    <location>
        <begin position="1"/>
        <end position="266"/>
    </location>
</feature>
<feature type="chain" id="PRO_0000452352" description="6-aminohexanoate-oligomer endohydrolase beta subunit" evidence="6">
    <location>
        <begin position="267"/>
        <end position="355"/>
    </location>
</feature>
<feature type="active site" description="Nucleophile" evidence="7">
    <location>
        <position position="267"/>
    </location>
</feature>
<feature type="helix" evidence="9">
    <location>
        <begin position="10"/>
        <end position="12"/>
    </location>
</feature>
<feature type="helix" evidence="9">
    <location>
        <begin position="35"/>
        <end position="37"/>
    </location>
</feature>
<feature type="strand" evidence="9">
    <location>
        <begin position="48"/>
        <end position="52"/>
    </location>
</feature>
<feature type="strand" evidence="9">
    <location>
        <begin position="59"/>
        <end position="65"/>
    </location>
</feature>
<feature type="turn" evidence="9">
    <location>
        <begin position="66"/>
        <end position="69"/>
    </location>
</feature>
<feature type="strand" evidence="9">
    <location>
        <begin position="70"/>
        <end position="87"/>
    </location>
</feature>
<feature type="strand" evidence="9">
    <location>
        <begin position="89"/>
        <end position="91"/>
    </location>
</feature>
<feature type="strand" evidence="9">
    <location>
        <begin position="99"/>
        <end position="109"/>
    </location>
</feature>
<feature type="helix" evidence="9">
    <location>
        <begin position="110"/>
        <end position="114"/>
    </location>
</feature>
<feature type="helix" evidence="9">
    <location>
        <begin position="115"/>
        <end position="127"/>
    </location>
</feature>
<feature type="turn" evidence="9">
    <location>
        <begin position="128"/>
        <end position="130"/>
    </location>
</feature>
<feature type="strand" evidence="9">
    <location>
        <begin position="140"/>
        <end position="144"/>
    </location>
</feature>
<feature type="strand" evidence="9">
    <location>
        <begin position="150"/>
        <end position="152"/>
    </location>
</feature>
<feature type="helix" evidence="9">
    <location>
        <begin position="159"/>
        <end position="167"/>
    </location>
</feature>
<feature type="strand" evidence="9">
    <location>
        <begin position="173"/>
        <end position="178"/>
    </location>
</feature>
<feature type="helix" evidence="9">
    <location>
        <begin position="180"/>
        <end position="182"/>
    </location>
</feature>
<feature type="helix" evidence="9">
    <location>
        <begin position="192"/>
        <end position="194"/>
    </location>
</feature>
<feature type="strand" evidence="9">
    <location>
        <begin position="200"/>
        <end position="207"/>
    </location>
</feature>
<feature type="strand" evidence="9">
    <location>
        <begin position="210"/>
        <end position="218"/>
    </location>
</feature>
<feature type="strand" evidence="9">
    <location>
        <begin position="221"/>
        <end position="225"/>
    </location>
</feature>
<feature type="strand" evidence="9">
    <location>
        <begin position="231"/>
        <end position="234"/>
    </location>
</feature>
<feature type="turn" evidence="9">
    <location>
        <begin position="238"/>
        <end position="240"/>
    </location>
</feature>
<feature type="helix" evidence="9">
    <location>
        <begin position="246"/>
        <end position="257"/>
    </location>
</feature>
<feature type="strand" evidence="9">
    <location>
        <begin position="268"/>
        <end position="276"/>
    </location>
</feature>
<feature type="helix" evidence="9">
    <location>
        <begin position="280"/>
        <end position="293"/>
    </location>
</feature>
<feature type="turn" evidence="9">
    <location>
        <begin position="294"/>
        <end position="297"/>
    </location>
</feature>
<feature type="strand" evidence="9">
    <location>
        <begin position="298"/>
        <end position="300"/>
    </location>
</feature>
<feature type="strand" evidence="9">
    <location>
        <begin position="309"/>
        <end position="318"/>
    </location>
</feature>
<feature type="helix" evidence="9">
    <location>
        <begin position="335"/>
        <end position="354"/>
    </location>
</feature>
<proteinExistence type="evidence at protein level"/>
<dbReference type="EC" id="3.5.1.117" evidence="1"/>
<dbReference type="EMBL" id="AB262079">
    <property type="protein sequence ID" value="BAE95769.2"/>
    <property type="molecule type" value="Genomic_DNA"/>
</dbReference>
<dbReference type="EMBL" id="AB264778">
    <property type="protein sequence ID" value="BAE97622.2"/>
    <property type="molecule type" value="Genomic_DNA"/>
</dbReference>
<dbReference type="PDB" id="3AXG">
    <property type="method" value="X-ray"/>
    <property type="resolution" value="2.00 A"/>
    <property type="chains" value="A/B/C/D/E/F/G/H/I/J/K/L/M/N/O=1-355"/>
</dbReference>
<dbReference type="PDBsum" id="3AXG"/>
<dbReference type="SMR" id="Q1EPR5"/>
<dbReference type="BRENDA" id="3.5.1.117">
    <property type="organism ID" value="10250"/>
</dbReference>
<dbReference type="UniPathway" id="UPA00207"/>
<dbReference type="EvolutionaryTrace" id="Q1EPR5"/>
<dbReference type="GO" id="GO:0004177">
    <property type="term" value="F:aminopeptidase activity"/>
    <property type="evidence" value="ECO:0007669"/>
    <property type="project" value="TreeGrafter"/>
</dbReference>
<dbReference type="GO" id="GO:0019876">
    <property type="term" value="P:nylon catabolic process"/>
    <property type="evidence" value="ECO:0000314"/>
    <property type="project" value="UniProtKB"/>
</dbReference>
<dbReference type="CDD" id="cd00123">
    <property type="entry name" value="DmpA_OAT"/>
    <property type="match status" value="1"/>
</dbReference>
<dbReference type="Gene3D" id="3.60.70.12">
    <property type="entry name" value="L-amino peptidase D-ALA esterase/amidase"/>
    <property type="match status" value="1"/>
</dbReference>
<dbReference type="InterPro" id="IPR016117">
    <property type="entry name" value="ArgJ-like_dom_sf"/>
</dbReference>
<dbReference type="InterPro" id="IPR005321">
    <property type="entry name" value="Peptidase_S58_DmpA"/>
</dbReference>
<dbReference type="PANTHER" id="PTHR36512:SF3">
    <property type="entry name" value="BLR5678 PROTEIN"/>
    <property type="match status" value="1"/>
</dbReference>
<dbReference type="PANTHER" id="PTHR36512">
    <property type="entry name" value="D-AMINOPEPTIDASE"/>
    <property type="match status" value="1"/>
</dbReference>
<dbReference type="Pfam" id="PF03576">
    <property type="entry name" value="Peptidase_S58"/>
    <property type="match status" value="1"/>
</dbReference>
<dbReference type="SUPFAM" id="SSF56266">
    <property type="entry name" value="DmpA/ArgJ-like"/>
    <property type="match status" value="1"/>
</dbReference>
<name>NYLC_AGRS5</name>
<organism>
    <name type="scientific">Agromyces sp. (strain KY5R)</name>
    <dbReference type="NCBI Taxonomy" id="388924"/>
    <lineage>
        <taxon>Bacteria</taxon>
        <taxon>Bacillati</taxon>
        <taxon>Actinomycetota</taxon>
        <taxon>Actinomycetes</taxon>
        <taxon>Micrococcales</taxon>
        <taxon>Microbacteriaceae</taxon>
        <taxon>Agromyces</taxon>
    </lineage>
</organism>